<sequence length="402" mass="43454">MEKLTIRDIDLKGKRVIMRVDFNVPMKDGEITDDTRIVEALPTIKYAIENGAIVILLSHLGRPKGERKPEFSLLPVAKRLSELLGKEVTFIPELYGEIVNEKVKNAKEGDVILLENTRFDKGETKNDPELAKKWAELADIHVNDAFGTAHRAHASNVGIAQYIPSVAGFLMEKEIKFLSKATTNPEKPYVVVLGGAKVSDKIGVITNLLDKADKILIGGAMMFTFLKSLGYNVGSSLVEDDKLDLAKRILEQAKEKGTEIVLPVDTVCAQKIEAGVETKTIDIKDGLPEGWMGLDIGPKTVELFRNSISGAKTIVWNGPMGVFEIEDFSNGTKEVAIAIAEETSKGATTIIGGGDSAAAIAKFGLKDKVSHVSTGGGASLEFLEGKELPGIASIANKKKIEN</sequence>
<accession>B7IDG7</accession>
<evidence type="ECO:0000255" key="1">
    <source>
        <dbReference type="HAMAP-Rule" id="MF_00145"/>
    </source>
</evidence>
<comment type="catalytic activity">
    <reaction evidence="1">
        <text>(2R)-3-phosphoglycerate + ATP = (2R)-3-phospho-glyceroyl phosphate + ADP</text>
        <dbReference type="Rhea" id="RHEA:14801"/>
        <dbReference type="ChEBI" id="CHEBI:30616"/>
        <dbReference type="ChEBI" id="CHEBI:57604"/>
        <dbReference type="ChEBI" id="CHEBI:58272"/>
        <dbReference type="ChEBI" id="CHEBI:456216"/>
        <dbReference type="EC" id="2.7.2.3"/>
    </reaction>
</comment>
<comment type="pathway">
    <text evidence="1">Carbohydrate degradation; glycolysis; pyruvate from D-glyceraldehyde 3-phosphate: step 2/5.</text>
</comment>
<comment type="subunit">
    <text evidence="1">Monomer.</text>
</comment>
<comment type="subcellular location">
    <subcellularLocation>
        <location evidence="1">Cytoplasm</location>
    </subcellularLocation>
</comment>
<comment type="similarity">
    <text evidence="1">Belongs to the phosphoglycerate kinase family.</text>
</comment>
<dbReference type="EC" id="2.7.2.3" evidence="1"/>
<dbReference type="EMBL" id="CP001185">
    <property type="protein sequence ID" value="ACJ76044.1"/>
    <property type="molecule type" value="Genomic_DNA"/>
</dbReference>
<dbReference type="RefSeq" id="WP_012580292.1">
    <property type="nucleotide sequence ID" value="NC_011653.1"/>
</dbReference>
<dbReference type="SMR" id="B7IDG7"/>
<dbReference type="STRING" id="484019.THA_1606"/>
<dbReference type="KEGG" id="taf:THA_1606"/>
<dbReference type="eggNOG" id="COG0126">
    <property type="taxonomic scope" value="Bacteria"/>
</dbReference>
<dbReference type="HOGENOM" id="CLU_025427_0_2_0"/>
<dbReference type="OrthoDB" id="9808460at2"/>
<dbReference type="UniPathway" id="UPA00109">
    <property type="reaction ID" value="UER00185"/>
</dbReference>
<dbReference type="Proteomes" id="UP000002453">
    <property type="component" value="Chromosome"/>
</dbReference>
<dbReference type="GO" id="GO:0005829">
    <property type="term" value="C:cytosol"/>
    <property type="evidence" value="ECO:0007669"/>
    <property type="project" value="TreeGrafter"/>
</dbReference>
<dbReference type="GO" id="GO:0043531">
    <property type="term" value="F:ADP binding"/>
    <property type="evidence" value="ECO:0007669"/>
    <property type="project" value="TreeGrafter"/>
</dbReference>
<dbReference type="GO" id="GO:0005524">
    <property type="term" value="F:ATP binding"/>
    <property type="evidence" value="ECO:0007669"/>
    <property type="project" value="UniProtKB-KW"/>
</dbReference>
<dbReference type="GO" id="GO:0004618">
    <property type="term" value="F:phosphoglycerate kinase activity"/>
    <property type="evidence" value="ECO:0007669"/>
    <property type="project" value="UniProtKB-UniRule"/>
</dbReference>
<dbReference type="GO" id="GO:0006094">
    <property type="term" value="P:gluconeogenesis"/>
    <property type="evidence" value="ECO:0007669"/>
    <property type="project" value="TreeGrafter"/>
</dbReference>
<dbReference type="GO" id="GO:0006096">
    <property type="term" value="P:glycolytic process"/>
    <property type="evidence" value="ECO:0007669"/>
    <property type="project" value="UniProtKB-UniRule"/>
</dbReference>
<dbReference type="CDD" id="cd00318">
    <property type="entry name" value="Phosphoglycerate_kinase"/>
    <property type="match status" value="1"/>
</dbReference>
<dbReference type="FunFam" id="3.40.50.1260:FF:000002">
    <property type="entry name" value="Phosphoglycerate kinase"/>
    <property type="match status" value="1"/>
</dbReference>
<dbReference type="FunFam" id="3.40.50.1260:FF:000007">
    <property type="entry name" value="Phosphoglycerate kinase"/>
    <property type="match status" value="1"/>
</dbReference>
<dbReference type="Gene3D" id="3.40.50.1260">
    <property type="entry name" value="Phosphoglycerate kinase, N-terminal domain"/>
    <property type="match status" value="2"/>
</dbReference>
<dbReference type="HAMAP" id="MF_00145">
    <property type="entry name" value="Phosphoglyc_kinase"/>
    <property type="match status" value="1"/>
</dbReference>
<dbReference type="InterPro" id="IPR001576">
    <property type="entry name" value="Phosphoglycerate_kinase"/>
</dbReference>
<dbReference type="InterPro" id="IPR015911">
    <property type="entry name" value="Phosphoglycerate_kinase_CS"/>
</dbReference>
<dbReference type="InterPro" id="IPR015824">
    <property type="entry name" value="Phosphoglycerate_kinase_N"/>
</dbReference>
<dbReference type="InterPro" id="IPR036043">
    <property type="entry name" value="Phosphoglycerate_kinase_sf"/>
</dbReference>
<dbReference type="PANTHER" id="PTHR11406">
    <property type="entry name" value="PHOSPHOGLYCERATE KINASE"/>
    <property type="match status" value="1"/>
</dbReference>
<dbReference type="PANTHER" id="PTHR11406:SF23">
    <property type="entry name" value="PHOSPHOGLYCERATE KINASE 1, CHLOROPLASTIC-RELATED"/>
    <property type="match status" value="1"/>
</dbReference>
<dbReference type="Pfam" id="PF00162">
    <property type="entry name" value="PGK"/>
    <property type="match status" value="1"/>
</dbReference>
<dbReference type="PIRSF" id="PIRSF000724">
    <property type="entry name" value="Pgk"/>
    <property type="match status" value="1"/>
</dbReference>
<dbReference type="PRINTS" id="PR00477">
    <property type="entry name" value="PHGLYCKINASE"/>
</dbReference>
<dbReference type="SUPFAM" id="SSF53748">
    <property type="entry name" value="Phosphoglycerate kinase"/>
    <property type="match status" value="1"/>
</dbReference>
<dbReference type="PROSITE" id="PS00111">
    <property type="entry name" value="PGLYCERATE_KINASE"/>
    <property type="match status" value="1"/>
</dbReference>
<reference key="1">
    <citation type="journal article" date="2009" name="J. Bacteriol.">
        <title>The genome of Thermosipho africanus TCF52B: lateral genetic connections to the Firmicutes and Archaea.</title>
        <authorList>
            <person name="Nesboe C.L."/>
            <person name="Bapteste E."/>
            <person name="Curtis B."/>
            <person name="Dahle H."/>
            <person name="Lopez P."/>
            <person name="Macleod D."/>
            <person name="Dlutek M."/>
            <person name="Bowman S."/>
            <person name="Zhaxybayeva O."/>
            <person name="Birkeland N.-K."/>
            <person name="Doolittle W.F."/>
        </authorList>
    </citation>
    <scope>NUCLEOTIDE SEQUENCE [LARGE SCALE GENOMIC DNA]</scope>
    <source>
        <strain>TCF52B</strain>
    </source>
</reference>
<feature type="chain" id="PRO_1000192858" description="Phosphoglycerate kinase">
    <location>
        <begin position="1"/>
        <end position="402"/>
    </location>
</feature>
<feature type="binding site" evidence="1">
    <location>
        <begin position="21"/>
        <end position="23"/>
    </location>
    <ligand>
        <name>substrate</name>
    </ligand>
</feature>
<feature type="binding site" evidence="1">
    <location>
        <position position="36"/>
    </location>
    <ligand>
        <name>substrate</name>
    </ligand>
</feature>
<feature type="binding site" evidence="1">
    <location>
        <begin position="59"/>
        <end position="62"/>
    </location>
    <ligand>
        <name>substrate</name>
    </ligand>
</feature>
<feature type="binding site" evidence="1">
    <location>
        <position position="118"/>
    </location>
    <ligand>
        <name>substrate</name>
    </ligand>
</feature>
<feature type="binding site" evidence="1">
    <location>
        <position position="151"/>
    </location>
    <ligand>
        <name>substrate</name>
    </ligand>
</feature>
<feature type="binding site" evidence="1">
    <location>
        <position position="201"/>
    </location>
    <ligand>
        <name>ATP</name>
        <dbReference type="ChEBI" id="CHEBI:30616"/>
    </ligand>
</feature>
<feature type="binding site" evidence="1">
    <location>
        <position position="293"/>
    </location>
    <ligand>
        <name>ATP</name>
        <dbReference type="ChEBI" id="CHEBI:30616"/>
    </ligand>
</feature>
<feature type="binding site" evidence="1">
    <location>
        <position position="324"/>
    </location>
    <ligand>
        <name>ATP</name>
        <dbReference type="ChEBI" id="CHEBI:30616"/>
    </ligand>
</feature>
<feature type="binding site" evidence="1">
    <location>
        <begin position="353"/>
        <end position="356"/>
    </location>
    <ligand>
        <name>ATP</name>
        <dbReference type="ChEBI" id="CHEBI:30616"/>
    </ligand>
</feature>
<protein>
    <recommendedName>
        <fullName evidence="1">Phosphoglycerate kinase</fullName>
        <ecNumber evidence="1">2.7.2.3</ecNumber>
    </recommendedName>
</protein>
<gene>
    <name evidence="1" type="primary">pgk</name>
    <name type="ordered locus">THA_1606</name>
</gene>
<organism>
    <name type="scientific">Thermosipho africanus (strain TCF52B)</name>
    <dbReference type="NCBI Taxonomy" id="484019"/>
    <lineage>
        <taxon>Bacteria</taxon>
        <taxon>Thermotogati</taxon>
        <taxon>Thermotogota</taxon>
        <taxon>Thermotogae</taxon>
        <taxon>Thermotogales</taxon>
        <taxon>Fervidobacteriaceae</taxon>
        <taxon>Thermosipho</taxon>
    </lineage>
</organism>
<name>PGK_THEAB</name>
<proteinExistence type="inferred from homology"/>
<keyword id="KW-0067">ATP-binding</keyword>
<keyword id="KW-0963">Cytoplasm</keyword>
<keyword id="KW-0324">Glycolysis</keyword>
<keyword id="KW-0418">Kinase</keyword>
<keyword id="KW-0547">Nucleotide-binding</keyword>
<keyword id="KW-1185">Reference proteome</keyword>
<keyword id="KW-0808">Transferase</keyword>